<keyword id="KW-0378">Hydrolase</keyword>
<keyword id="KW-0408">Iron</keyword>
<keyword id="KW-0479">Metal-binding</keyword>
<keyword id="KW-0648">Protein biosynthesis</keyword>
<keyword id="KW-1185">Reference proteome</keyword>
<organism>
    <name type="scientific">Pelodictyon phaeoclathratiforme (strain DSM 5477 / BU-1)</name>
    <dbReference type="NCBI Taxonomy" id="324925"/>
    <lineage>
        <taxon>Bacteria</taxon>
        <taxon>Pseudomonadati</taxon>
        <taxon>Chlorobiota</taxon>
        <taxon>Chlorobiia</taxon>
        <taxon>Chlorobiales</taxon>
        <taxon>Chlorobiaceae</taxon>
        <taxon>Chlorobium/Pelodictyon group</taxon>
        <taxon>Pelodictyon</taxon>
    </lineage>
</organism>
<comment type="function">
    <text evidence="1">Removes the formyl group from the N-terminal Met of newly synthesized proteins. Requires at least a dipeptide for an efficient rate of reaction. N-terminal L-methionine is a prerequisite for activity but the enzyme has broad specificity at other positions.</text>
</comment>
<comment type="catalytic activity">
    <reaction evidence="1">
        <text>N-terminal N-formyl-L-methionyl-[peptide] + H2O = N-terminal L-methionyl-[peptide] + formate</text>
        <dbReference type="Rhea" id="RHEA:24420"/>
        <dbReference type="Rhea" id="RHEA-COMP:10639"/>
        <dbReference type="Rhea" id="RHEA-COMP:10640"/>
        <dbReference type="ChEBI" id="CHEBI:15377"/>
        <dbReference type="ChEBI" id="CHEBI:15740"/>
        <dbReference type="ChEBI" id="CHEBI:49298"/>
        <dbReference type="ChEBI" id="CHEBI:64731"/>
        <dbReference type="EC" id="3.5.1.88"/>
    </reaction>
</comment>
<comment type="cofactor">
    <cofactor evidence="1">
        <name>Fe(2+)</name>
        <dbReference type="ChEBI" id="CHEBI:29033"/>
    </cofactor>
    <text evidence="1">Binds 1 Fe(2+) ion.</text>
</comment>
<comment type="similarity">
    <text evidence="1">Belongs to the polypeptide deformylase family.</text>
</comment>
<gene>
    <name evidence="1" type="primary">def</name>
    <name type="ordered locus">Ppha_1788</name>
</gene>
<accession>B4SBG6</accession>
<name>DEF_PELPB</name>
<sequence length="188" mass="20886">MILPINIYSDDILRLKAKPLKGVDSAIEELIASMFESMRNASGIGLAAPQVGRSIRLLVLDVSCVSKCEHEKPMVVINPHILSVRGHNDMEEGCLSVPGVQGYVVRPAAITLKYRDEHFAERTGEFSGMVARVIQHEIDHLDGTLFVDRMEKRDRKKIQKELTALASGIVDTEYPVVEREVVPIAKPT</sequence>
<reference key="1">
    <citation type="submission" date="2008-06" db="EMBL/GenBank/DDBJ databases">
        <title>Complete sequence of Pelodictyon phaeoclathratiforme BU-1.</title>
        <authorList>
            <consortium name="US DOE Joint Genome Institute"/>
            <person name="Lucas S."/>
            <person name="Copeland A."/>
            <person name="Lapidus A."/>
            <person name="Glavina del Rio T."/>
            <person name="Dalin E."/>
            <person name="Tice H."/>
            <person name="Bruce D."/>
            <person name="Goodwin L."/>
            <person name="Pitluck S."/>
            <person name="Schmutz J."/>
            <person name="Larimer F."/>
            <person name="Land M."/>
            <person name="Hauser L."/>
            <person name="Kyrpides N."/>
            <person name="Mikhailova N."/>
            <person name="Liu Z."/>
            <person name="Li T."/>
            <person name="Zhao F."/>
            <person name="Overmann J."/>
            <person name="Bryant D.A."/>
            <person name="Richardson P."/>
        </authorList>
    </citation>
    <scope>NUCLEOTIDE SEQUENCE [LARGE SCALE GENOMIC DNA]</scope>
    <source>
        <strain>DSM 5477 / BU-1</strain>
    </source>
</reference>
<feature type="chain" id="PRO_1000097330" description="Peptide deformylase">
    <location>
        <begin position="1"/>
        <end position="188"/>
    </location>
</feature>
<feature type="active site" evidence="1">
    <location>
        <position position="137"/>
    </location>
</feature>
<feature type="binding site" evidence="1">
    <location>
        <position position="94"/>
    </location>
    <ligand>
        <name>Fe cation</name>
        <dbReference type="ChEBI" id="CHEBI:24875"/>
    </ligand>
</feature>
<feature type="binding site" evidence="1">
    <location>
        <position position="136"/>
    </location>
    <ligand>
        <name>Fe cation</name>
        <dbReference type="ChEBI" id="CHEBI:24875"/>
    </ligand>
</feature>
<feature type="binding site" evidence="1">
    <location>
        <position position="140"/>
    </location>
    <ligand>
        <name>Fe cation</name>
        <dbReference type="ChEBI" id="CHEBI:24875"/>
    </ligand>
</feature>
<proteinExistence type="inferred from homology"/>
<protein>
    <recommendedName>
        <fullName evidence="1">Peptide deformylase</fullName>
        <shortName evidence="1">PDF</shortName>
        <ecNumber evidence="1">3.5.1.88</ecNumber>
    </recommendedName>
    <alternativeName>
        <fullName evidence="1">Polypeptide deformylase</fullName>
    </alternativeName>
</protein>
<dbReference type="EC" id="3.5.1.88" evidence="1"/>
<dbReference type="EMBL" id="CP001110">
    <property type="protein sequence ID" value="ACF44020.1"/>
    <property type="molecule type" value="Genomic_DNA"/>
</dbReference>
<dbReference type="RefSeq" id="WP_012508507.1">
    <property type="nucleotide sequence ID" value="NC_011060.1"/>
</dbReference>
<dbReference type="SMR" id="B4SBG6"/>
<dbReference type="STRING" id="324925.Ppha_1788"/>
<dbReference type="KEGG" id="pph:Ppha_1788"/>
<dbReference type="eggNOG" id="COG0242">
    <property type="taxonomic scope" value="Bacteria"/>
</dbReference>
<dbReference type="HOGENOM" id="CLU_061901_2_0_10"/>
<dbReference type="OrthoDB" id="9784988at2"/>
<dbReference type="Proteomes" id="UP000002724">
    <property type="component" value="Chromosome"/>
</dbReference>
<dbReference type="GO" id="GO:0046872">
    <property type="term" value="F:metal ion binding"/>
    <property type="evidence" value="ECO:0007669"/>
    <property type="project" value="UniProtKB-KW"/>
</dbReference>
<dbReference type="GO" id="GO:0042586">
    <property type="term" value="F:peptide deformylase activity"/>
    <property type="evidence" value="ECO:0007669"/>
    <property type="project" value="UniProtKB-UniRule"/>
</dbReference>
<dbReference type="GO" id="GO:0043686">
    <property type="term" value="P:co-translational protein modification"/>
    <property type="evidence" value="ECO:0007669"/>
    <property type="project" value="TreeGrafter"/>
</dbReference>
<dbReference type="GO" id="GO:0006412">
    <property type="term" value="P:translation"/>
    <property type="evidence" value="ECO:0007669"/>
    <property type="project" value="UniProtKB-UniRule"/>
</dbReference>
<dbReference type="CDD" id="cd00487">
    <property type="entry name" value="Pep_deformylase"/>
    <property type="match status" value="1"/>
</dbReference>
<dbReference type="Gene3D" id="3.90.45.10">
    <property type="entry name" value="Peptide deformylase"/>
    <property type="match status" value="1"/>
</dbReference>
<dbReference type="HAMAP" id="MF_00163">
    <property type="entry name" value="Pep_deformylase"/>
    <property type="match status" value="1"/>
</dbReference>
<dbReference type="InterPro" id="IPR023635">
    <property type="entry name" value="Peptide_deformylase"/>
</dbReference>
<dbReference type="InterPro" id="IPR036821">
    <property type="entry name" value="Peptide_deformylase_sf"/>
</dbReference>
<dbReference type="NCBIfam" id="TIGR00079">
    <property type="entry name" value="pept_deformyl"/>
    <property type="match status" value="1"/>
</dbReference>
<dbReference type="NCBIfam" id="NF001159">
    <property type="entry name" value="PRK00150.1-3"/>
    <property type="match status" value="1"/>
</dbReference>
<dbReference type="PANTHER" id="PTHR10458">
    <property type="entry name" value="PEPTIDE DEFORMYLASE"/>
    <property type="match status" value="1"/>
</dbReference>
<dbReference type="PANTHER" id="PTHR10458:SF22">
    <property type="entry name" value="PEPTIDE DEFORMYLASE"/>
    <property type="match status" value="1"/>
</dbReference>
<dbReference type="Pfam" id="PF01327">
    <property type="entry name" value="Pep_deformylase"/>
    <property type="match status" value="1"/>
</dbReference>
<dbReference type="PIRSF" id="PIRSF004749">
    <property type="entry name" value="Pep_def"/>
    <property type="match status" value="1"/>
</dbReference>
<dbReference type="PRINTS" id="PR01576">
    <property type="entry name" value="PDEFORMYLASE"/>
</dbReference>
<dbReference type="SUPFAM" id="SSF56420">
    <property type="entry name" value="Peptide deformylase"/>
    <property type="match status" value="1"/>
</dbReference>
<evidence type="ECO:0000255" key="1">
    <source>
        <dbReference type="HAMAP-Rule" id="MF_00163"/>
    </source>
</evidence>